<gene>
    <name evidence="1" type="primary">proB</name>
    <name type="ordered locus">BPP0308</name>
</gene>
<comment type="function">
    <text evidence="1">Catalyzes the transfer of a phosphate group to glutamate to form L-glutamate 5-phosphate.</text>
</comment>
<comment type="catalytic activity">
    <reaction evidence="1">
        <text>L-glutamate + ATP = L-glutamyl 5-phosphate + ADP</text>
        <dbReference type="Rhea" id="RHEA:14877"/>
        <dbReference type="ChEBI" id="CHEBI:29985"/>
        <dbReference type="ChEBI" id="CHEBI:30616"/>
        <dbReference type="ChEBI" id="CHEBI:58274"/>
        <dbReference type="ChEBI" id="CHEBI:456216"/>
        <dbReference type="EC" id="2.7.2.11"/>
    </reaction>
</comment>
<comment type="pathway">
    <text evidence="1">Amino-acid biosynthesis; L-proline biosynthesis; L-glutamate 5-semialdehyde from L-glutamate: step 1/2.</text>
</comment>
<comment type="subcellular location">
    <subcellularLocation>
        <location evidence="1">Cytoplasm</location>
    </subcellularLocation>
</comment>
<comment type="similarity">
    <text evidence="1">Belongs to the glutamate 5-kinase family.</text>
</comment>
<proteinExistence type="inferred from homology"/>
<reference key="1">
    <citation type="journal article" date="2003" name="Nat. Genet.">
        <title>Comparative analysis of the genome sequences of Bordetella pertussis, Bordetella parapertussis and Bordetella bronchiseptica.</title>
        <authorList>
            <person name="Parkhill J."/>
            <person name="Sebaihia M."/>
            <person name="Preston A."/>
            <person name="Murphy L.D."/>
            <person name="Thomson N.R."/>
            <person name="Harris D.E."/>
            <person name="Holden M.T.G."/>
            <person name="Churcher C.M."/>
            <person name="Bentley S.D."/>
            <person name="Mungall K.L."/>
            <person name="Cerdeno-Tarraga A.-M."/>
            <person name="Temple L."/>
            <person name="James K.D."/>
            <person name="Harris B."/>
            <person name="Quail M.A."/>
            <person name="Achtman M."/>
            <person name="Atkin R."/>
            <person name="Baker S."/>
            <person name="Basham D."/>
            <person name="Bason N."/>
            <person name="Cherevach I."/>
            <person name="Chillingworth T."/>
            <person name="Collins M."/>
            <person name="Cronin A."/>
            <person name="Davis P."/>
            <person name="Doggett J."/>
            <person name="Feltwell T."/>
            <person name="Goble A."/>
            <person name="Hamlin N."/>
            <person name="Hauser H."/>
            <person name="Holroyd S."/>
            <person name="Jagels K."/>
            <person name="Leather S."/>
            <person name="Moule S."/>
            <person name="Norberczak H."/>
            <person name="O'Neil S."/>
            <person name="Ormond D."/>
            <person name="Price C."/>
            <person name="Rabbinowitsch E."/>
            <person name="Rutter S."/>
            <person name="Sanders M."/>
            <person name="Saunders D."/>
            <person name="Seeger K."/>
            <person name="Sharp S."/>
            <person name="Simmonds M."/>
            <person name="Skelton J."/>
            <person name="Squares R."/>
            <person name="Squares S."/>
            <person name="Stevens K."/>
            <person name="Unwin L."/>
            <person name="Whitehead S."/>
            <person name="Barrell B.G."/>
            <person name="Maskell D.J."/>
        </authorList>
    </citation>
    <scope>NUCLEOTIDE SEQUENCE [LARGE SCALE GENOMIC DNA]</scope>
    <source>
        <strain>12822 / ATCC BAA-587 / NCTC 13253</strain>
    </source>
</reference>
<feature type="chain" id="PRO_0000109648" description="Glutamate 5-kinase">
    <location>
        <begin position="1"/>
        <end position="378"/>
    </location>
</feature>
<feature type="domain" description="PUA" evidence="1">
    <location>
        <begin position="286"/>
        <end position="364"/>
    </location>
</feature>
<feature type="binding site" evidence="1">
    <location>
        <position position="20"/>
    </location>
    <ligand>
        <name>ATP</name>
        <dbReference type="ChEBI" id="CHEBI:30616"/>
    </ligand>
</feature>
<feature type="binding site" evidence="1">
    <location>
        <position position="60"/>
    </location>
    <ligand>
        <name>substrate</name>
    </ligand>
</feature>
<feature type="binding site" evidence="1">
    <location>
        <position position="147"/>
    </location>
    <ligand>
        <name>substrate</name>
    </ligand>
</feature>
<feature type="binding site" evidence="1">
    <location>
        <position position="159"/>
    </location>
    <ligand>
        <name>substrate</name>
    </ligand>
</feature>
<feature type="binding site" evidence="1">
    <location>
        <begin position="179"/>
        <end position="180"/>
    </location>
    <ligand>
        <name>ATP</name>
        <dbReference type="ChEBI" id="CHEBI:30616"/>
    </ligand>
</feature>
<feature type="binding site" evidence="1">
    <location>
        <begin position="221"/>
        <end position="227"/>
    </location>
    <ligand>
        <name>ATP</name>
        <dbReference type="ChEBI" id="CHEBI:30616"/>
    </ligand>
</feature>
<evidence type="ECO:0000255" key="1">
    <source>
        <dbReference type="HAMAP-Rule" id="MF_00456"/>
    </source>
</evidence>
<accession>Q7W1P3</accession>
<name>PROB_BORPA</name>
<sequence>MTAQTSAVSVISAANRLVAKVGSSLVTNEGRGLDRAAVDHWAAQIAALHQQGKQVVLVSSGAIAEGMARLGWRKRPSAMHELQAAAAVGQMGLCQAYEAAFAEFGLRTAQILLTHEDLADRHRYLNARSTLFALLRLGVVPIVNENDTVVTDEIRFGDNDTLGALVTNLIEADALIILTDQRGLYEADPRCDPAARFVAHAQAGDAALEAMAGGAGSGVGTGGMLTKILAAKRAAHSGAHTVIASGRERNVLTRLAQGECIGTELRAVLPVWSARKQWLADHLRLRGRVVLDDGAVHALLHEGKSLLPIGVAEVQGEFERGDVVACVDMHGRECARGLINYSSADTRRILRQPSSQIARILGSMTDPELMHRDNLVVT</sequence>
<dbReference type="EC" id="2.7.2.11" evidence="1"/>
<dbReference type="EMBL" id="BX640423">
    <property type="protein sequence ID" value="CAE40049.1"/>
    <property type="molecule type" value="Genomic_DNA"/>
</dbReference>
<dbReference type="RefSeq" id="WP_010927398.1">
    <property type="nucleotide sequence ID" value="NC_002928.3"/>
</dbReference>
<dbReference type="SMR" id="Q7W1P3"/>
<dbReference type="GeneID" id="93206539"/>
<dbReference type="KEGG" id="bpa:BPP0308"/>
<dbReference type="HOGENOM" id="CLU_025400_2_0_4"/>
<dbReference type="UniPathway" id="UPA00098">
    <property type="reaction ID" value="UER00359"/>
</dbReference>
<dbReference type="Proteomes" id="UP000001421">
    <property type="component" value="Chromosome"/>
</dbReference>
<dbReference type="GO" id="GO:0005829">
    <property type="term" value="C:cytosol"/>
    <property type="evidence" value="ECO:0007669"/>
    <property type="project" value="TreeGrafter"/>
</dbReference>
<dbReference type="GO" id="GO:0005524">
    <property type="term" value="F:ATP binding"/>
    <property type="evidence" value="ECO:0007669"/>
    <property type="project" value="UniProtKB-KW"/>
</dbReference>
<dbReference type="GO" id="GO:0004349">
    <property type="term" value="F:glutamate 5-kinase activity"/>
    <property type="evidence" value="ECO:0007669"/>
    <property type="project" value="UniProtKB-UniRule"/>
</dbReference>
<dbReference type="GO" id="GO:0003723">
    <property type="term" value="F:RNA binding"/>
    <property type="evidence" value="ECO:0007669"/>
    <property type="project" value="InterPro"/>
</dbReference>
<dbReference type="GO" id="GO:0055129">
    <property type="term" value="P:L-proline biosynthetic process"/>
    <property type="evidence" value="ECO:0007669"/>
    <property type="project" value="UniProtKB-UniRule"/>
</dbReference>
<dbReference type="CDD" id="cd04242">
    <property type="entry name" value="AAK_G5K_ProB"/>
    <property type="match status" value="1"/>
</dbReference>
<dbReference type="CDD" id="cd21157">
    <property type="entry name" value="PUA_G5K"/>
    <property type="match status" value="1"/>
</dbReference>
<dbReference type="FunFam" id="2.30.130.10:FF:000007">
    <property type="entry name" value="Glutamate 5-kinase"/>
    <property type="match status" value="1"/>
</dbReference>
<dbReference type="FunFam" id="3.40.1160.10:FF:000018">
    <property type="entry name" value="Glutamate 5-kinase"/>
    <property type="match status" value="1"/>
</dbReference>
<dbReference type="Gene3D" id="3.40.1160.10">
    <property type="entry name" value="Acetylglutamate kinase-like"/>
    <property type="match status" value="1"/>
</dbReference>
<dbReference type="Gene3D" id="2.30.130.10">
    <property type="entry name" value="PUA domain"/>
    <property type="match status" value="1"/>
</dbReference>
<dbReference type="HAMAP" id="MF_00456">
    <property type="entry name" value="ProB"/>
    <property type="match status" value="1"/>
</dbReference>
<dbReference type="InterPro" id="IPR036393">
    <property type="entry name" value="AceGlu_kinase-like_sf"/>
</dbReference>
<dbReference type="InterPro" id="IPR001048">
    <property type="entry name" value="Asp/Glu/Uridylate_kinase"/>
</dbReference>
<dbReference type="InterPro" id="IPR041739">
    <property type="entry name" value="G5K_ProB"/>
</dbReference>
<dbReference type="InterPro" id="IPR001057">
    <property type="entry name" value="Glu/AcGlu_kinase"/>
</dbReference>
<dbReference type="InterPro" id="IPR011529">
    <property type="entry name" value="Glu_5kinase"/>
</dbReference>
<dbReference type="InterPro" id="IPR005715">
    <property type="entry name" value="Glu_5kinase/COase_Synthase"/>
</dbReference>
<dbReference type="InterPro" id="IPR019797">
    <property type="entry name" value="Glutamate_5-kinase_CS"/>
</dbReference>
<dbReference type="InterPro" id="IPR002478">
    <property type="entry name" value="PUA"/>
</dbReference>
<dbReference type="InterPro" id="IPR015947">
    <property type="entry name" value="PUA-like_sf"/>
</dbReference>
<dbReference type="InterPro" id="IPR036974">
    <property type="entry name" value="PUA_sf"/>
</dbReference>
<dbReference type="NCBIfam" id="TIGR01027">
    <property type="entry name" value="proB"/>
    <property type="match status" value="1"/>
</dbReference>
<dbReference type="PANTHER" id="PTHR43654">
    <property type="entry name" value="GLUTAMATE 5-KINASE"/>
    <property type="match status" value="1"/>
</dbReference>
<dbReference type="PANTHER" id="PTHR43654:SF1">
    <property type="entry name" value="ISOPENTENYL PHOSPHATE KINASE"/>
    <property type="match status" value="1"/>
</dbReference>
<dbReference type="Pfam" id="PF00696">
    <property type="entry name" value="AA_kinase"/>
    <property type="match status" value="1"/>
</dbReference>
<dbReference type="Pfam" id="PF01472">
    <property type="entry name" value="PUA"/>
    <property type="match status" value="1"/>
</dbReference>
<dbReference type="PIRSF" id="PIRSF000729">
    <property type="entry name" value="GK"/>
    <property type="match status" value="1"/>
</dbReference>
<dbReference type="PRINTS" id="PR00474">
    <property type="entry name" value="GLU5KINASE"/>
</dbReference>
<dbReference type="SMART" id="SM00359">
    <property type="entry name" value="PUA"/>
    <property type="match status" value="1"/>
</dbReference>
<dbReference type="SUPFAM" id="SSF53633">
    <property type="entry name" value="Carbamate kinase-like"/>
    <property type="match status" value="1"/>
</dbReference>
<dbReference type="SUPFAM" id="SSF88697">
    <property type="entry name" value="PUA domain-like"/>
    <property type="match status" value="1"/>
</dbReference>
<dbReference type="PROSITE" id="PS00902">
    <property type="entry name" value="GLUTAMATE_5_KINASE"/>
    <property type="match status" value="1"/>
</dbReference>
<dbReference type="PROSITE" id="PS50890">
    <property type="entry name" value="PUA"/>
    <property type="match status" value="1"/>
</dbReference>
<protein>
    <recommendedName>
        <fullName evidence="1">Glutamate 5-kinase</fullName>
        <ecNumber evidence="1">2.7.2.11</ecNumber>
    </recommendedName>
    <alternativeName>
        <fullName evidence="1">Gamma-glutamyl kinase</fullName>
        <shortName evidence="1">GK</shortName>
    </alternativeName>
</protein>
<keyword id="KW-0028">Amino-acid biosynthesis</keyword>
<keyword id="KW-0067">ATP-binding</keyword>
<keyword id="KW-0963">Cytoplasm</keyword>
<keyword id="KW-0418">Kinase</keyword>
<keyword id="KW-0547">Nucleotide-binding</keyword>
<keyword id="KW-0641">Proline biosynthesis</keyword>
<keyword id="KW-0808">Transferase</keyword>
<organism>
    <name type="scientific">Bordetella parapertussis (strain 12822 / ATCC BAA-587 / NCTC 13253)</name>
    <dbReference type="NCBI Taxonomy" id="257311"/>
    <lineage>
        <taxon>Bacteria</taxon>
        <taxon>Pseudomonadati</taxon>
        <taxon>Pseudomonadota</taxon>
        <taxon>Betaproteobacteria</taxon>
        <taxon>Burkholderiales</taxon>
        <taxon>Alcaligenaceae</taxon>
        <taxon>Bordetella</taxon>
    </lineage>
</organism>